<protein>
    <recommendedName>
        <fullName evidence="1">Phosphoenolpyruvate carboxylase</fullName>
        <shortName evidence="1">PEPC</shortName>
        <shortName evidence="1">PEPCase</shortName>
        <ecNumber evidence="1">4.1.1.31</ecNumber>
    </recommendedName>
</protein>
<evidence type="ECO:0000255" key="1">
    <source>
        <dbReference type="HAMAP-Rule" id="MF_00595"/>
    </source>
</evidence>
<accession>Q04KL8</accession>
<feature type="chain" id="PRO_1000025593" description="Phosphoenolpyruvate carboxylase">
    <location>
        <begin position="1"/>
        <end position="898"/>
    </location>
</feature>
<feature type="active site" evidence="1">
    <location>
        <position position="138"/>
    </location>
</feature>
<feature type="active site" evidence="1">
    <location>
        <position position="561"/>
    </location>
</feature>
<comment type="function">
    <text evidence="1">Forms oxaloacetate, a four-carbon dicarboxylic acid source for the tricarboxylic acid cycle.</text>
</comment>
<comment type="catalytic activity">
    <reaction evidence="1">
        <text>oxaloacetate + phosphate = phosphoenolpyruvate + hydrogencarbonate</text>
        <dbReference type="Rhea" id="RHEA:28370"/>
        <dbReference type="ChEBI" id="CHEBI:16452"/>
        <dbReference type="ChEBI" id="CHEBI:17544"/>
        <dbReference type="ChEBI" id="CHEBI:43474"/>
        <dbReference type="ChEBI" id="CHEBI:58702"/>
        <dbReference type="EC" id="4.1.1.31"/>
    </reaction>
</comment>
<comment type="cofactor">
    <cofactor evidence="1">
        <name>Mg(2+)</name>
        <dbReference type="ChEBI" id="CHEBI:18420"/>
    </cofactor>
</comment>
<comment type="similarity">
    <text evidence="1">Belongs to the PEPCase type 1 family.</text>
</comment>
<dbReference type="EC" id="4.1.1.31" evidence="1"/>
<dbReference type="EMBL" id="CP000410">
    <property type="protein sequence ID" value="ABJ54336.1"/>
    <property type="molecule type" value="Genomic_DNA"/>
</dbReference>
<dbReference type="RefSeq" id="WP_000058147.1">
    <property type="nucleotide sequence ID" value="NZ_JAMLJR010000011.1"/>
</dbReference>
<dbReference type="SMR" id="Q04KL8"/>
<dbReference type="PaxDb" id="373153-SPD_0953"/>
<dbReference type="KEGG" id="spd:SPD_0953"/>
<dbReference type="eggNOG" id="COG2352">
    <property type="taxonomic scope" value="Bacteria"/>
</dbReference>
<dbReference type="HOGENOM" id="CLU_006557_2_0_9"/>
<dbReference type="BioCyc" id="SPNE373153:G1G6V-1045-MONOMER"/>
<dbReference type="Proteomes" id="UP000001452">
    <property type="component" value="Chromosome"/>
</dbReference>
<dbReference type="GO" id="GO:0005829">
    <property type="term" value="C:cytosol"/>
    <property type="evidence" value="ECO:0007669"/>
    <property type="project" value="TreeGrafter"/>
</dbReference>
<dbReference type="GO" id="GO:0000287">
    <property type="term" value="F:magnesium ion binding"/>
    <property type="evidence" value="ECO:0007669"/>
    <property type="project" value="UniProtKB-UniRule"/>
</dbReference>
<dbReference type="GO" id="GO:0008964">
    <property type="term" value="F:phosphoenolpyruvate carboxylase activity"/>
    <property type="evidence" value="ECO:0007669"/>
    <property type="project" value="UniProtKB-UniRule"/>
</dbReference>
<dbReference type="GO" id="GO:0015977">
    <property type="term" value="P:carbon fixation"/>
    <property type="evidence" value="ECO:0007669"/>
    <property type="project" value="UniProtKB-UniRule"/>
</dbReference>
<dbReference type="GO" id="GO:0006107">
    <property type="term" value="P:oxaloacetate metabolic process"/>
    <property type="evidence" value="ECO:0007669"/>
    <property type="project" value="UniProtKB-UniRule"/>
</dbReference>
<dbReference type="GO" id="GO:0006099">
    <property type="term" value="P:tricarboxylic acid cycle"/>
    <property type="evidence" value="ECO:0007669"/>
    <property type="project" value="InterPro"/>
</dbReference>
<dbReference type="Gene3D" id="1.20.1440.90">
    <property type="entry name" value="Phosphoenolpyruvate/pyruvate domain"/>
    <property type="match status" value="1"/>
</dbReference>
<dbReference type="HAMAP" id="MF_00595">
    <property type="entry name" value="PEPcase_type1"/>
    <property type="match status" value="1"/>
</dbReference>
<dbReference type="InterPro" id="IPR021135">
    <property type="entry name" value="PEP_COase"/>
</dbReference>
<dbReference type="InterPro" id="IPR022805">
    <property type="entry name" value="PEP_COase_bac/pln-type"/>
</dbReference>
<dbReference type="InterPro" id="IPR018129">
    <property type="entry name" value="PEP_COase_Lys_AS"/>
</dbReference>
<dbReference type="InterPro" id="IPR033129">
    <property type="entry name" value="PEPCASE_His_AS"/>
</dbReference>
<dbReference type="InterPro" id="IPR015813">
    <property type="entry name" value="Pyrv/PenolPyrv_kinase-like_dom"/>
</dbReference>
<dbReference type="NCBIfam" id="NF000584">
    <property type="entry name" value="PRK00009.1"/>
    <property type="match status" value="1"/>
</dbReference>
<dbReference type="PANTHER" id="PTHR30523">
    <property type="entry name" value="PHOSPHOENOLPYRUVATE CARBOXYLASE"/>
    <property type="match status" value="1"/>
</dbReference>
<dbReference type="PANTHER" id="PTHR30523:SF6">
    <property type="entry name" value="PHOSPHOENOLPYRUVATE CARBOXYLASE"/>
    <property type="match status" value="1"/>
</dbReference>
<dbReference type="Pfam" id="PF00311">
    <property type="entry name" value="PEPcase"/>
    <property type="match status" value="1"/>
</dbReference>
<dbReference type="PRINTS" id="PR00150">
    <property type="entry name" value="PEPCARBXLASE"/>
</dbReference>
<dbReference type="SUPFAM" id="SSF51621">
    <property type="entry name" value="Phosphoenolpyruvate/pyruvate domain"/>
    <property type="match status" value="1"/>
</dbReference>
<dbReference type="PROSITE" id="PS00781">
    <property type="entry name" value="PEPCASE_1"/>
    <property type="match status" value="1"/>
</dbReference>
<dbReference type="PROSITE" id="PS00393">
    <property type="entry name" value="PEPCASE_2"/>
    <property type="match status" value="1"/>
</dbReference>
<gene>
    <name evidence="1" type="primary">ppc</name>
    <name type="ordered locus">SPD_0953</name>
</gene>
<keyword id="KW-0120">Carbon dioxide fixation</keyword>
<keyword id="KW-0456">Lyase</keyword>
<keyword id="KW-0460">Magnesium</keyword>
<keyword id="KW-1185">Reference proteome</keyword>
<reference key="1">
    <citation type="journal article" date="2007" name="J. Bacteriol.">
        <title>Genome sequence of Avery's virulent serotype 2 strain D39 of Streptococcus pneumoniae and comparison with that of unencapsulated laboratory strain R6.</title>
        <authorList>
            <person name="Lanie J.A."/>
            <person name="Ng W.-L."/>
            <person name="Kazmierczak K.M."/>
            <person name="Andrzejewski T.M."/>
            <person name="Davidsen T.M."/>
            <person name="Wayne K.J."/>
            <person name="Tettelin H."/>
            <person name="Glass J.I."/>
            <person name="Winkler M.E."/>
        </authorList>
    </citation>
    <scope>NUCLEOTIDE SEQUENCE [LARGE SCALE GENOMIC DNA]</scope>
    <source>
        <strain>D39 / NCTC 7466</strain>
    </source>
</reference>
<organism>
    <name type="scientific">Streptococcus pneumoniae serotype 2 (strain D39 / NCTC 7466)</name>
    <dbReference type="NCBI Taxonomy" id="373153"/>
    <lineage>
        <taxon>Bacteria</taxon>
        <taxon>Bacillati</taxon>
        <taxon>Bacillota</taxon>
        <taxon>Bacilli</taxon>
        <taxon>Lactobacillales</taxon>
        <taxon>Streptococcaceae</taxon>
        <taxon>Streptococcus</taxon>
    </lineage>
</organism>
<name>CAPP_STRP2</name>
<proteinExistence type="inferred from homology"/>
<sequence>MSLQKLENSSNKSVVQEEVLILTELLEDITKNMLAPETFEKIIQLKELSTQEDYQGLNRLVTSLSNDEMVYISRYFSILPLLINISEDVDLAYEINHQNNIDQDYLGKLSTTIKLVAEKENAVEILEHLNVVPVLTAHPTQVQRKSMLDLTNHIHSLLRKYRDVKLGLINKDKWYNDLRRYIEIIMQTDMIREKKLKVTNEITNAMEYYNSSFLKAVPHLTTEYKRLAQAHGLNLKQAKPITMGMWIGGDRDGNPFVTAKTLKQSALTQCEVIMNYYDKKIYQLYREFSLSTSIVNVSKQVREMARQSKDNSIYREKELYRRALFDIQSKIQATKTYLIEDEEVGTRYETANDFYKDLIAIRDSLLENKGESLISGDFVELLQAVEIFGFYLASIDMRQDSSVYEACVAELLKSAGIHSRYSELSEEEKCDLLLKELEEDPRILSATHAEKSELLAKELAIFKTARVLKDKLGDDVIRQTIISHATSLSDMLELAILLKEVGLVDTERARVQIVPLFETIEDLDHSEETMRKYLSLSLAKKWIDSRNNYQEIMLGYSDSNKDGGYLSSCWTLYKAQQQLTAIGDEFGVKVTFFHGRGGTVGRGGGPTYEAITSQPLKSIKDRIRLTEQGEVIGNKYGNKDAAYYNLEMLVSAAINRMITQKKSDTNTPNRYEAIMDQVVDRSYDIYRDLVFGNEHFYDYFFESSPIKAISSFNIGSRPAARKTITEIGGLRAIPWVFSWSQSRVMFPGWYGVGSSFKEFINKNPENIAILRDMYQNWPFFQSLLSNVDMVLSKSNMNIAFEYAKLCEDEQVKAIYETILNEWQVTKNVILAIEGHDELLADNPYLKASLDYRMPYFNILNYIQLELIKRQRRGELSSDQERLIHITINGIATGLRNSG</sequence>